<keyword id="KW-0028">Amino-acid biosynthesis</keyword>
<keyword id="KW-0456">Lyase</keyword>
<keyword id="KW-0479">Metal-binding</keyword>
<keyword id="KW-0486">Methionine biosynthesis</keyword>
<keyword id="KW-0862">Zinc</keyword>
<protein>
    <recommendedName>
        <fullName evidence="1">Methylthioribulose-1-phosphate dehydratase</fullName>
        <shortName evidence="1">MTRu-1-P dehydratase</shortName>
        <ecNumber evidence="1">4.2.1.109</ecNumber>
    </recommendedName>
</protein>
<dbReference type="EC" id="4.2.1.109" evidence="1"/>
<dbReference type="EMBL" id="CP000647">
    <property type="protein sequence ID" value="ABR76084.1"/>
    <property type="molecule type" value="Genomic_DNA"/>
</dbReference>
<dbReference type="RefSeq" id="WP_002894164.1">
    <property type="nucleotide sequence ID" value="NC_009648.1"/>
</dbReference>
<dbReference type="SMR" id="A6T663"/>
<dbReference type="STRING" id="272620.KPN_00634"/>
<dbReference type="PaxDb" id="272620-KPN_00634"/>
<dbReference type="EnsemblBacteria" id="ABR76084">
    <property type="protein sequence ID" value="ABR76084"/>
    <property type="gene ID" value="KPN_00634"/>
</dbReference>
<dbReference type="KEGG" id="kpn:KPN_00634"/>
<dbReference type="HOGENOM" id="CLU_006033_4_1_6"/>
<dbReference type="UniPathway" id="UPA00904">
    <property type="reaction ID" value="UER00875"/>
</dbReference>
<dbReference type="Proteomes" id="UP000000265">
    <property type="component" value="Chromosome"/>
</dbReference>
<dbReference type="GO" id="GO:0005829">
    <property type="term" value="C:cytosol"/>
    <property type="evidence" value="ECO:0007669"/>
    <property type="project" value="TreeGrafter"/>
</dbReference>
<dbReference type="GO" id="GO:0016832">
    <property type="term" value="F:aldehyde-lyase activity"/>
    <property type="evidence" value="ECO:0007669"/>
    <property type="project" value="TreeGrafter"/>
</dbReference>
<dbReference type="GO" id="GO:0046570">
    <property type="term" value="F:methylthioribulose 1-phosphate dehydratase activity"/>
    <property type="evidence" value="ECO:0007669"/>
    <property type="project" value="UniProtKB-UniRule"/>
</dbReference>
<dbReference type="GO" id="GO:0008270">
    <property type="term" value="F:zinc ion binding"/>
    <property type="evidence" value="ECO:0007669"/>
    <property type="project" value="UniProtKB-UniRule"/>
</dbReference>
<dbReference type="GO" id="GO:0019509">
    <property type="term" value="P:L-methionine salvage from methylthioadenosine"/>
    <property type="evidence" value="ECO:0007669"/>
    <property type="project" value="UniProtKB-UniRule"/>
</dbReference>
<dbReference type="GO" id="GO:0019323">
    <property type="term" value="P:pentose catabolic process"/>
    <property type="evidence" value="ECO:0007669"/>
    <property type="project" value="TreeGrafter"/>
</dbReference>
<dbReference type="Gene3D" id="3.40.225.10">
    <property type="entry name" value="Class II aldolase/adducin N-terminal domain"/>
    <property type="match status" value="1"/>
</dbReference>
<dbReference type="HAMAP" id="MF_01677">
    <property type="entry name" value="Salvage_MtnB"/>
    <property type="match status" value="1"/>
</dbReference>
<dbReference type="InterPro" id="IPR050197">
    <property type="entry name" value="Aldolase_class_II_sugar_metab"/>
</dbReference>
<dbReference type="InterPro" id="IPR001303">
    <property type="entry name" value="Aldolase_II/adducin_N"/>
</dbReference>
<dbReference type="InterPro" id="IPR036409">
    <property type="entry name" value="Aldolase_II/adducin_N_sf"/>
</dbReference>
<dbReference type="InterPro" id="IPR017714">
    <property type="entry name" value="MethylthioRu-1-P_deHdtase_MtnB"/>
</dbReference>
<dbReference type="NCBIfam" id="NF006672">
    <property type="entry name" value="PRK09220.1"/>
    <property type="match status" value="1"/>
</dbReference>
<dbReference type="NCBIfam" id="TIGR03328">
    <property type="entry name" value="salvage_mtnB"/>
    <property type="match status" value="1"/>
</dbReference>
<dbReference type="PANTHER" id="PTHR22789:SF0">
    <property type="entry name" value="3-OXO-TETRONATE 4-PHOSPHATE DECARBOXYLASE-RELATED"/>
    <property type="match status" value="1"/>
</dbReference>
<dbReference type="PANTHER" id="PTHR22789">
    <property type="entry name" value="FUCULOSE PHOSPHATE ALDOLASE"/>
    <property type="match status" value="1"/>
</dbReference>
<dbReference type="Pfam" id="PF00596">
    <property type="entry name" value="Aldolase_II"/>
    <property type="match status" value="1"/>
</dbReference>
<dbReference type="SMART" id="SM01007">
    <property type="entry name" value="Aldolase_II"/>
    <property type="match status" value="1"/>
</dbReference>
<dbReference type="SUPFAM" id="SSF53639">
    <property type="entry name" value="AraD/HMP-PK domain-like"/>
    <property type="match status" value="1"/>
</dbReference>
<organism>
    <name type="scientific">Klebsiella pneumoniae subsp. pneumoniae (strain ATCC 700721 / MGH 78578)</name>
    <dbReference type="NCBI Taxonomy" id="272620"/>
    <lineage>
        <taxon>Bacteria</taxon>
        <taxon>Pseudomonadati</taxon>
        <taxon>Pseudomonadota</taxon>
        <taxon>Gammaproteobacteria</taxon>
        <taxon>Enterobacterales</taxon>
        <taxon>Enterobacteriaceae</taxon>
        <taxon>Klebsiella/Raoultella group</taxon>
        <taxon>Klebsiella</taxon>
        <taxon>Klebsiella pneumoniae complex</taxon>
    </lineage>
</organism>
<name>MTNB_KLEP7</name>
<evidence type="ECO:0000255" key="1">
    <source>
        <dbReference type="HAMAP-Rule" id="MF_01677"/>
    </source>
</evidence>
<accession>A6T663</accession>
<sequence>MWQERLAQLVTTCHWIGAKGWAPATGGNMSVRQDDTWCWLSESGRDKGSLTTEDFLQVEIATNQAPSGRKPSAETGLHTLVYRLFPEANVVLHVHTVNATVLSRIEKSDTLALQGYEMQKTLSGQHSHLDTVPIAIFDNDQDIDALAARIADYAQTRPLRYGFLLRGHGLTCWGKDIQEARRQLEGLEFLFECELMRRRYEP</sequence>
<proteinExistence type="inferred from homology"/>
<reference key="1">
    <citation type="submission" date="2006-09" db="EMBL/GenBank/DDBJ databases">
        <authorList>
            <consortium name="The Klebsiella pneumonia Genome Sequencing Project"/>
            <person name="McClelland M."/>
            <person name="Sanderson E.K."/>
            <person name="Spieth J."/>
            <person name="Clifton W.S."/>
            <person name="Latreille P."/>
            <person name="Sabo A."/>
            <person name="Pepin K."/>
            <person name="Bhonagiri V."/>
            <person name="Porwollik S."/>
            <person name="Ali J."/>
            <person name="Wilson R.K."/>
        </authorList>
    </citation>
    <scope>NUCLEOTIDE SEQUENCE [LARGE SCALE GENOMIC DNA]</scope>
    <source>
        <strain>ATCC 700721 / MGH 78578</strain>
    </source>
</reference>
<comment type="function">
    <text evidence="1">Catalyzes the dehydration of methylthioribulose-1-phosphate (MTRu-1-P) into 2,3-diketo-5-methylthiopentyl-1-phosphate (DK-MTP-1-P).</text>
</comment>
<comment type="catalytic activity">
    <reaction evidence="1">
        <text>5-(methylsulfanyl)-D-ribulose 1-phosphate = 5-methylsulfanyl-2,3-dioxopentyl phosphate + H2O</text>
        <dbReference type="Rhea" id="RHEA:15549"/>
        <dbReference type="ChEBI" id="CHEBI:15377"/>
        <dbReference type="ChEBI" id="CHEBI:58548"/>
        <dbReference type="ChEBI" id="CHEBI:58828"/>
        <dbReference type="EC" id="4.2.1.109"/>
    </reaction>
</comment>
<comment type="cofactor">
    <cofactor evidence="1">
        <name>Zn(2+)</name>
        <dbReference type="ChEBI" id="CHEBI:29105"/>
    </cofactor>
    <text evidence="1">Binds 1 zinc ion per subunit.</text>
</comment>
<comment type="pathway">
    <text evidence="1">Amino-acid biosynthesis; L-methionine biosynthesis via salvage pathway; L-methionine from S-methyl-5-thio-alpha-D-ribose 1-phosphate: step 2/6.</text>
</comment>
<comment type="similarity">
    <text evidence="1">Belongs to the aldolase class II family. MtnB subfamily.</text>
</comment>
<gene>
    <name evidence="1" type="primary">mtnB</name>
    <name type="ordered locus">KPN78578_06230</name>
    <name type="ORF">KPN_00634</name>
</gene>
<feature type="chain" id="PRO_0000357085" description="Methylthioribulose-1-phosphate dehydratase">
    <location>
        <begin position="1"/>
        <end position="202"/>
    </location>
</feature>
<feature type="binding site" evidence="1">
    <location>
        <position position="93"/>
    </location>
    <ligand>
        <name>Zn(2+)</name>
        <dbReference type="ChEBI" id="CHEBI:29105"/>
    </ligand>
</feature>
<feature type="binding site" evidence="1">
    <location>
        <position position="95"/>
    </location>
    <ligand>
        <name>Zn(2+)</name>
        <dbReference type="ChEBI" id="CHEBI:29105"/>
    </ligand>
</feature>